<proteinExistence type="inferred from homology"/>
<gene>
    <name evidence="1" type="primary">uppP</name>
    <name type="synonym">bacA</name>
    <name type="ordered locus">SPD_0417</name>
</gene>
<evidence type="ECO:0000255" key="1">
    <source>
        <dbReference type="HAMAP-Rule" id="MF_01006"/>
    </source>
</evidence>
<dbReference type="EC" id="3.6.1.27" evidence="1"/>
<dbReference type="EMBL" id="CP000410">
    <property type="protein sequence ID" value="ABJ53932.1"/>
    <property type="molecule type" value="Genomic_DNA"/>
</dbReference>
<dbReference type="RefSeq" id="WP_000280773.1">
    <property type="nucleotide sequence ID" value="NZ_JAMLJR010000009.1"/>
</dbReference>
<dbReference type="SMR" id="Q04M23"/>
<dbReference type="PaxDb" id="373153-SPD_0417"/>
<dbReference type="KEGG" id="spd:SPD_0417"/>
<dbReference type="eggNOG" id="COG1968">
    <property type="taxonomic scope" value="Bacteria"/>
</dbReference>
<dbReference type="HOGENOM" id="CLU_060296_2_0_9"/>
<dbReference type="BioCyc" id="SPNE373153:G1G6V-455-MONOMER"/>
<dbReference type="Proteomes" id="UP000001452">
    <property type="component" value="Chromosome"/>
</dbReference>
<dbReference type="GO" id="GO:0005886">
    <property type="term" value="C:plasma membrane"/>
    <property type="evidence" value="ECO:0007669"/>
    <property type="project" value="UniProtKB-SubCell"/>
</dbReference>
<dbReference type="GO" id="GO:0050380">
    <property type="term" value="F:undecaprenyl-diphosphatase activity"/>
    <property type="evidence" value="ECO:0007669"/>
    <property type="project" value="UniProtKB-UniRule"/>
</dbReference>
<dbReference type="GO" id="GO:0071555">
    <property type="term" value="P:cell wall organization"/>
    <property type="evidence" value="ECO:0007669"/>
    <property type="project" value="UniProtKB-KW"/>
</dbReference>
<dbReference type="GO" id="GO:0009252">
    <property type="term" value="P:peptidoglycan biosynthetic process"/>
    <property type="evidence" value="ECO:0007669"/>
    <property type="project" value="UniProtKB-KW"/>
</dbReference>
<dbReference type="GO" id="GO:0008360">
    <property type="term" value="P:regulation of cell shape"/>
    <property type="evidence" value="ECO:0007669"/>
    <property type="project" value="UniProtKB-KW"/>
</dbReference>
<dbReference type="GO" id="GO:0046677">
    <property type="term" value="P:response to antibiotic"/>
    <property type="evidence" value="ECO:0007669"/>
    <property type="project" value="UniProtKB-UniRule"/>
</dbReference>
<dbReference type="HAMAP" id="MF_01006">
    <property type="entry name" value="Undec_diphosphatase"/>
    <property type="match status" value="1"/>
</dbReference>
<dbReference type="InterPro" id="IPR003824">
    <property type="entry name" value="UppP"/>
</dbReference>
<dbReference type="NCBIfam" id="NF001391">
    <property type="entry name" value="PRK00281.1-5"/>
    <property type="match status" value="1"/>
</dbReference>
<dbReference type="PANTHER" id="PTHR30622">
    <property type="entry name" value="UNDECAPRENYL-DIPHOSPHATASE"/>
    <property type="match status" value="1"/>
</dbReference>
<dbReference type="PANTHER" id="PTHR30622:SF3">
    <property type="entry name" value="UNDECAPRENYL-DIPHOSPHATASE"/>
    <property type="match status" value="1"/>
</dbReference>
<dbReference type="Pfam" id="PF02673">
    <property type="entry name" value="BacA"/>
    <property type="match status" value="1"/>
</dbReference>
<protein>
    <recommendedName>
        <fullName evidence="1">Undecaprenyl-diphosphatase</fullName>
        <ecNumber evidence="1">3.6.1.27</ecNumber>
    </recommendedName>
    <alternativeName>
        <fullName evidence="1">Bacitracin resistance protein</fullName>
    </alternativeName>
    <alternativeName>
        <fullName evidence="1">Undecaprenyl pyrophosphate phosphatase</fullName>
    </alternativeName>
</protein>
<feature type="chain" id="PRO_0000290771" description="Undecaprenyl-diphosphatase">
    <location>
        <begin position="1"/>
        <end position="281"/>
    </location>
</feature>
<feature type="transmembrane region" description="Helical" evidence="1">
    <location>
        <begin position="4"/>
        <end position="24"/>
    </location>
</feature>
<feature type="transmembrane region" description="Helical" evidence="1">
    <location>
        <begin position="45"/>
        <end position="65"/>
    </location>
</feature>
<feature type="transmembrane region" description="Helical" evidence="1">
    <location>
        <begin position="89"/>
        <end position="109"/>
    </location>
</feature>
<feature type="transmembrane region" description="Helical" evidence="1">
    <location>
        <begin position="113"/>
        <end position="133"/>
    </location>
</feature>
<feature type="transmembrane region" description="Helical" evidence="1">
    <location>
        <begin position="152"/>
        <end position="172"/>
    </location>
</feature>
<feature type="transmembrane region" description="Helical" evidence="1">
    <location>
        <begin position="190"/>
        <end position="210"/>
    </location>
</feature>
<feature type="transmembrane region" description="Helical" evidence="1">
    <location>
        <begin position="225"/>
        <end position="245"/>
    </location>
</feature>
<feature type="transmembrane region" description="Helical" evidence="1">
    <location>
        <begin position="257"/>
        <end position="277"/>
    </location>
</feature>
<name>UPPP_STRP2</name>
<comment type="function">
    <text evidence="1">Catalyzes the dephosphorylation of undecaprenyl diphosphate (UPP). Confers resistance to bacitracin.</text>
</comment>
<comment type="catalytic activity">
    <reaction evidence="1">
        <text>di-trans,octa-cis-undecaprenyl diphosphate + H2O = di-trans,octa-cis-undecaprenyl phosphate + phosphate + H(+)</text>
        <dbReference type="Rhea" id="RHEA:28094"/>
        <dbReference type="ChEBI" id="CHEBI:15377"/>
        <dbReference type="ChEBI" id="CHEBI:15378"/>
        <dbReference type="ChEBI" id="CHEBI:43474"/>
        <dbReference type="ChEBI" id="CHEBI:58405"/>
        <dbReference type="ChEBI" id="CHEBI:60392"/>
        <dbReference type="EC" id="3.6.1.27"/>
    </reaction>
</comment>
<comment type="subcellular location">
    <subcellularLocation>
        <location evidence="1">Cell membrane</location>
        <topology evidence="1">Multi-pass membrane protein</topology>
    </subcellularLocation>
</comment>
<comment type="miscellaneous">
    <text>Bacitracin is thought to be involved in the inhibition of peptidoglycan synthesis by sequestering undecaprenyl diphosphate, thereby reducing the pool of lipid carrier available.</text>
</comment>
<comment type="similarity">
    <text evidence="1">Belongs to the UppP family.</text>
</comment>
<reference key="1">
    <citation type="journal article" date="2007" name="J. Bacteriol.">
        <title>Genome sequence of Avery's virulent serotype 2 strain D39 of Streptococcus pneumoniae and comparison with that of unencapsulated laboratory strain R6.</title>
        <authorList>
            <person name="Lanie J.A."/>
            <person name="Ng W.-L."/>
            <person name="Kazmierczak K.M."/>
            <person name="Andrzejewski T.M."/>
            <person name="Davidsen T.M."/>
            <person name="Wayne K.J."/>
            <person name="Tettelin H."/>
            <person name="Glass J.I."/>
            <person name="Winkler M.E."/>
        </authorList>
    </citation>
    <scope>NUCLEOTIDE SEQUENCE [LARGE SCALE GENOMIC DNA]</scope>
    <source>
        <strain>D39 / NCTC 7466</strain>
    </source>
</reference>
<keyword id="KW-0046">Antibiotic resistance</keyword>
<keyword id="KW-1003">Cell membrane</keyword>
<keyword id="KW-0133">Cell shape</keyword>
<keyword id="KW-0961">Cell wall biogenesis/degradation</keyword>
<keyword id="KW-0378">Hydrolase</keyword>
<keyword id="KW-0472">Membrane</keyword>
<keyword id="KW-0573">Peptidoglycan synthesis</keyword>
<keyword id="KW-1185">Reference proteome</keyword>
<keyword id="KW-0812">Transmembrane</keyword>
<keyword id="KW-1133">Transmembrane helix</keyword>
<sequence>MYLIEILKSIFFGIVEGITEWLPISSTGHLILAEEFIQYQNQNEAFMSMFNVVIQLGAILAVMVIYFNKLNPFKPTKDKQEVRKTWRLWLKVLIATLPLLGVFKFDDWFDTHFHNMVSVALMLIIYGVAFIYLEKRNKARAIEPSVTELDKLPYTTAFYIGLFQVLALLPGTSRSGATIVGGLLNGTSRSVVTEFTFYLGIPVMFGASALKIFKFVKAGELLSFGQLFLLLVAMGVAFAVSMVAIRFLTSYVKKHDFTLFGKYRIVLGSVLLLYSFVRLFV</sequence>
<accession>Q04M23</accession>
<organism>
    <name type="scientific">Streptococcus pneumoniae serotype 2 (strain D39 / NCTC 7466)</name>
    <dbReference type="NCBI Taxonomy" id="373153"/>
    <lineage>
        <taxon>Bacteria</taxon>
        <taxon>Bacillati</taxon>
        <taxon>Bacillota</taxon>
        <taxon>Bacilli</taxon>
        <taxon>Lactobacillales</taxon>
        <taxon>Streptococcaceae</taxon>
        <taxon>Streptococcus</taxon>
    </lineage>
</organism>